<name>RBFA_RICFE</name>
<sequence length="120" mass="13898">MKKLTKTNSHRQQKLASIINEALIEILRRGKMLDSRLFDCPLTITKVIVTADLKIANCYFLPFNTKLTIDEIMDALSNSKNAIRNFITNKINMKFSPDIRFHYDHGFDNAIKVEELLKNI</sequence>
<gene>
    <name evidence="1" type="primary">rbfA</name>
    <name type="ordered locus">RF_0669</name>
</gene>
<keyword id="KW-0963">Cytoplasm</keyword>
<keyword id="KW-0690">Ribosome biogenesis</keyword>
<protein>
    <recommendedName>
        <fullName evidence="1">Ribosome-binding factor A</fullName>
    </recommendedName>
</protein>
<reference key="1">
    <citation type="journal article" date="2005" name="PLoS Biol.">
        <title>The genome sequence of Rickettsia felis identifies the first putative conjugative plasmid in an obligate intracellular parasite.</title>
        <authorList>
            <person name="Ogata H."/>
            <person name="Renesto P."/>
            <person name="Audic S."/>
            <person name="Robert C."/>
            <person name="Blanc G."/>
            <person name="Fournier P.-E."/>
            <person name="Parinello H."/>
            <person name="Claverie J.-M."/>
            <person name="Raoult D."/>
        </authorList>
    </citation>
    <scope>NUCLEOTIDE SEQUENCE [LARGE SCALE GENOMIC DNA]</scope>
    <source>
        <strain>ATCC VR-1525 / URRWXCal2</strain>
    </source>
</reference>
<dbReference type="EMBL" id="CP000053">
    <property type="protein sequence ID" value="AAY61520.1"/>
    <property type="molecule type" value="Genomic_DNA"/>
</dbReference>
<dbReference type="SMR" id="Q4ULQ3"/>
<dbReference type="STRING" id="315456.RF_0669"/>
<dbReference type="KEGG" id="rfe:RF_0669"/>
<dbReference type="eggNOG" id="COG0858">
    <property type="taxonomic scope" value="Bacteria"/>
</dbReference>
<dbReference type="HOGENOM" id="CLU_089475_1_0_5"/>
<dbReference type="OrthoDB" id="9805051at2"/>
<dbReference type="Proteomes" id="UP000008548">
    <property type="component" value="Chromosome"/>
</dbReference>
<dbReference type="GO" id="GO:0005829">
    <property type="term" value="C:cytosol"/>
    <property type="evidence" value="ECO:0007669"/>
    <property type="project" value="TreeGrafter"/>
</dbReference>
<dbReference type="GO" id="GO:0043024">
    <property type="term" value="F:ribosomal small subunit binding"/>
    <property type="evidence" value="ECO:0007669"/>
    <property type="project" value="TreeGrafter"/>
</dbReference>
<dbReference type="GO" id="GO:0030490">
    <property type="term" value="P:maturation of SSU-rRNA"/>
    <property type="evidence" value="ECO:0007669"/>
    <property type="project" value="UniProtKB-UniRule"/>
</dbReference>
<dbReference type="Gene3D" id="3.30.300.20">
    <property type="match status" value="1"/>
</dbReference>
<dbReference type="HAMAP" id="MF_00003">
    <property type="entry name" value="RbfA"/>
    <property type="match status" value="1"/>
</dbReference>
<dbReference type="InterPro" id="IPR015946">
    <property type="entry name" value="KH_dom-like_a/b"/>
</dbReference>
<dbReference type="InterPro" id="IPR000238">
    <property type="entry name" value="RbfA"/>
</dbReference>
<dbReference type="InterPro" id="IPR023799">
    <property type="entry name" value="RbfA_dom_sf"/>
</dbReference>
<dbReference type="InterPro" id="IPR020053">
    <property type="entry name" value="Ribosome-bd_factorA_CS"/>
</dbReference>
<dbReference type="NCBIfam" id="NF001799">
    <property type="entry name" value="PRK00521.2-2"/>
    <property type="match status" value="1"/>
</dbReference>
<dbReference type="NCBIfam" id="TIGR00082">
    <property type="entry name" value="rbfA"/>
    <property type="match status" value="1"/>
</dbReference>
<dbReference type="PANTHER" id="PTHR33515">
    <property type="entry name" value="RIBOSOME-BINDING FACTOR A, CHLOROPLASTIC-RELATED"/>
    <property type="match status" value="1"/>
</dbReference>
<dbReference type="PANTHER" id="PTHR33515:SF1">
    <property type="entry name" value="RIBOSOME-BINDING FACTOR A, CHLOROPLASTIC-RELATED"/>
    <property type="match status" value="1"/>
</dbReference>
<dbReference type="Pfam" id="PF02033">
    <property type="entry name" value="RBFA"/>
    <property type="match status" value="1"/>
</dbReference>
<dbReference type="SUPFAM" id="SSF89919">
    <property type="entry name" value="Ribosome-binding factor A, RbfA"/>
    <property type="match status" value="1"/>
</dbReference>
<dbReference type="PROSITE" id="PS01319">
    <property type="entry name" value="RBFA"/>
    <property type="match status" value="1"/>
</dbReference>
<organism>
    <name type="scientific">Rickettsia felis (strain ATCC VR-1525 / URRWXCal2)</name>
    <name type="common">Rickettsia azadi</name>
    <dbReference type="NCBI Taxonomy" id="315456"/>
    <lineage>
        <taxon>Bacteria</taxon>
        <taxon>Pseudomonadati</taxon>
        <taxon>Pseudomonadota</taxon>
        <taxon>Alphaproteobacteria</taxon>
        <taxon>Rickettsiales</taxon>
        <taxon>Rickettsiaceae</taxon>
        <taxon>Rickettsieae</taxon>
        <taxon>Rickettsia</taxon>
        <taxon>spotted fever group</taxon>
    </lineage>
</organism>
<accession>Q4ULQ3</accession>
<feature type="chain" id="PRO_0000274888" description="Ribosome-binding factor A">
    <location>
        <begin position="1"/>
        <end position="120"/>
    </location>
</feature>
<evidence type="ECO:0000255" key="1">
    <source>
        <dbReference type="HAMAP-Rule" id="MF_00003"/>
    </source>
</evidence>
<comment type="function">
    <text evidence="1">One of several proteins that assist in the late maturation steps of the functional core of the 30S ribosomal subunit. Associates with free 30S ribosomal subunits (but not with 30S subunits that are part of 70S ribosomes or polysomes). Required for efficient processing of 16S rRNA. May interact with the 5'-terminal helix region of 16S rRNA.</text>
</comment>
<comment type="subunit">
    <text evidence="1">Monomer. Binds 30S ribosomal subunits, but not 50S ribosomal subunits or 70S ribosomes.</text>
</comment>
<comment type="subcellular location">
    <subcellularLocation>
        <location evidence="1">Cytoplasm</location>
    </subcellularLocation>
</comment>
<comment type="similarity">
    <text evidence="1">Belongs to the RbfA family.</text>
</comment>
<proteinExistence type="inferred from homology"/>